<organism>
    <name type="scientific">Escherichia coli (strain K12 / DH10B)</name>
    <dbReference type="NCBI Taxonomy" id="316385"/>
    <lineage>
        <taxon>Bacteria</taxon>
        <taxon>Pseudomonadati</taxon>
        <taxon>Pseudomonadota</taxon>
        <taxon>Gammaproteobacteria</taxon>
        <taxon>Enterobacterales</taxon>
        <taxon>Enterobacteriaceae</taxon>
        <taxon>Escherichia</taxon>
    </lineage>
</organism>
<gene>
    <name evidence="1" type="primary">astA</name>
    <name type="ordered locus">ECDH10B_1885</name>
</gene>
<accession>B1XGK8</accession>
<reference key="1">
    <citation type="journal article" date="2008" name="J. Bacteriol.">
        <title>The complete genome sequence of Escherichia coli DH10B: insights into the biology of a laboratory workhorse.</title>
        <authorList>
            <person name="Durfee T."/>
            <person name="Nelson R."/>
            <person name="Baldwin S."/>
            <person name="Plunkett G. III"/>
            <person name="Burland V."/>
            <person name="Mau B."/>
            <person name="Petrosino J.F."/>
            <person name="Qin X."/>
            <person name="Muzny D.M."/>
            <person name="Ayele M."/>
            <person name="Gibbs R.A."/>
            <person name="Csorgo B."/>
            <person name="Posfai G."/>
            <person name="Weinstock G.M."/>
            <person name="Blattner F.R."/>
        </authorList>
    </citation>
    <scope>NUCLEOTIDE SEQUENCE [LARGE SCALE GENOMIC DNA]</scope>
    <source>
        <strain>K12 / DH10B</strain>
    </source>
</reference>
<evidence type="ECO:0000255" key="1">
    <source>
        <dbReference type="HAMAP-Rule" id="MF_01171"/>
    </source>
</evidence>
<proteinExistence type="inferred from homology"/>
<keyword id="KW-0012">Acyltransferase</keyword>
<keyword id="KW-0056">Arginine metabolism</keyword>
<keyword id="KW-0808">Transferase</keyword>
<sequence>MMVIRPVERSDVSALMQLASKTGGGLTSLPANEATLSARIERAIKTWQGELPKSEQGYVFVLEDSETGTVAGICAIEVAVGLNDPWYNYRVGTLVHASKELNVYNALPTLFLSNDHTGSSELCTLFLDPDWRKEGNGYLLSKSRFMFMAAFRDKFNDKVVAEMRGVIDEHGYSPFWQSLGKRFFSMDFSRADFLCGTGQKAFIAELMPKHPIYTHFLSQEAQDVIGQVHPQTAPARAVLEKEGFRYRNYIDIFDGGPTLECDIDRVRAIRKSRLVEVAEGQPAQGDFPACLVANENYHHFRVVLVRTDPATERLILTAAQLDALKCHAGDRVRLVRLCAEEKTA</sequence>
<name>ASTA_ECODH</name>
<feature type="chain" id="PRO_1000137979" description="Arginine N-succinyltransferase">
    <location>
        <begin position="1"/>
        <end position="344"/>
    </location>
</feature>
<feature type="active site" description="Proton donor" evidence="1">
    <location>
        <position position="229"/>
    </location>
</feature>
<feature type="binding site" evidence="1">
    <location>
        <position position="125"/>
    </location>
    <ligand>
        <name>succinyl-CoA</name>
        <dbReference type="ChEBI" id="CHEBI:57292"/>
    </ligand>
</feature>
<comment type="function">
    <text evidence="1">Catalyzes the transfer of succinyl-CoA to arginine to produce N(2)-succinylarginine.</text>
</comment>
<comment type="catalytic activity">
    <reaction evidence="1">
        <text>succinyl-CoA + L-arginine = N(2)-succinyl-L-arginine + CoA + H(+)</text>
        <dbReference type="Rhea" id="RHEA:15185"/>
        <dbReference type="ChEBI" id="CHEBI:15378"/>
        <dbReference type="ChEBI" id="CHEBI:32682"/>
        <dbReference type="ChEBI" id="CHEBI:57287"/>
        <dbReference type="ChEBI" id="CHEBI:57292"/>
        <dbReference type="ChEBI" id="CHEBI:58241"/>
        <dbReference type="EC" id="2.3.1.109"/>
    </reaction>
</comment>
<comment type="pathway">
    <text evidence="1">Amino-acid degradation; L-arginine degradation via AST pathway; L-glutamate and succinate from L-arginine: step 1/5.</text>
</comment>
<comment type="similarity">
    <text evidence="1">Belongs to the arginine N-succinyltransferase family.</text>
</comment>
<dbReference type="EC" id="2.3.1.109" evidence="1"/>
<dbReference type="EMBL" id="CP000948">
    <property type="protein sequence ID" value="ACB02946.1"/>
    <property type="molecule type" value="Genomic_DNA"/>
</dbReference>
<dbReference type="RefSeq" id="WP_000989419.1">
    <property type="nucleotide sequence ID" value="NC_010473.1"/>
</dbReference>
<dbReference type="SMR" id="B1XGK8"/>
<dbReference type="GeneID" id="75171814"/>
<dbReference type="KEGG" id="ecd:ECDH10B_1885"/>
<dbReference type="HOGENOM" id="CLU_057655_0_0_6"/>
<dbReference type="UniPathway" id="UPA00185">
    <property type="reaction ID" value="UER00279"/>
</dbReference>
<dbReference type="GO" id="GO:0008791">
    <property type="term" value="F:arginine N-succinyltransferase activity"/>
    <property type="evidence" value="ECO:0007669"/>
    <property type="project" value="UniProtKB-UniRule"/>
</dbReference>
<dbReference type="GO" id="GO:0019544">
    <property type="term" value="P:arginine catabolic process to glutamate"/>
    <property type="evidence" value="ECO:0007669"/>
    <property type="project" value="UniProtKB-UniRule"/>
</dbReference>
<dbReference type="GO" id="GO:0019545">
    <property type="term" value="P:arginine catabolic process to succinate"/>
    <property type="evidence" value="ECO:0007669"/>
    <property type="project" value="UniProtKB-UniRule"/>
</dbReference>
<dbReference type="Gene3D" id="2.40.40.20">
    <property type="match status" value="1"/>
</dbReference>
<dbReference type="Gene3D" id="3.40.630.30">
    <property type="match status" value="1"/>
</dbReference>
<dbReference type="HAMAP" id="MF_01171">
    <property type="entry name" value="AstA"/>
    <property type="match status" value="1"/>
</dbReference>
<dbReference type="InterPro" id="IPR016181">
    <property type="entry name" value="Acyl_CoA_acyltransferase"/>
</dbReference>
<dbReference type="InterPro" id="IPR007041">
    <property type="entry name" value="Arg_succinylTrfase_AstA/AruG"/>
</dbReference>
<dbReference type="InterPro" id="IPR017650">
    <property type="entry name" value="Arginine_N-succinylTrfase"/>
</dbReference>
<dbReference type="NCBIfam" id="TIGR03243">
    <property type="entry name" value="arg_catab_AOST"/>
    <property type="match status" value="1"/>
</dbReference>
<dbReference type="NCBIfam" id="TIGR03244">
    <property type="entry name" value="arg_catab_AstA"/>
    <property type="match status" value="1"/>
</dbReference>
<dbReference type="NCBIfam" id="NF007770">
    <property type="entry name" value="PRK10456.1"/>
    <property type="match status" value="1"/>
</dbReference>
<dbReference type="PANTHER" id="PTHR30420:SF1">
    <property type="entry name" value="ARGININE N-SUCCINYLTRANSFERASE"/>
    <property type="match status" value="1"/>
</dbReference>
<dbReference type="PANTHER" id="PTHR30420">
    <property type="entry name" value="N-SUCCINYLARGININE DIHYDROLASE"/>
    <property type="match status" value="1"/>
</dbReference>
<dbReference type="Pfam" id="PF04958">
    <property type="entry name" value="AstA"/>
    <property type="match status" value="1"/>
</dbReference>
<dbReference type="SUPFAM" id="SSF55729">
    <property type="entry name" value="Acyl-CoA N-acyltransferases (Nat)"/>
    <property type="match status" value="1"/>
</dbReference>
<protein>
    <recommendedName>
        <fullName evidence="1">Arginine N-succinyltransferase</fullName>
        <shortName evidence="1">AST</shortName>
        <ecNumber evidence="1">2.3.1.109</ecNumber>
    </recommendedName>
    <alternativeName>
        <fullName evidence="1">AOST</fullName>
    </alternativeName>
</protein>